<reference key="1">
    <citation type="journal article" date="2000" name="DNA Res.">
        <title>Complete genome structure of the nitrogen-fixing symbiotic bacterium Mesorhizobium loti.</title>
        <authorList>
            <person name="Kaneko T."/>
            <person name="Nakamura Y."/>
            <person name="Sato S."/>
            <person name="Asamizu E."/>
            <person name="Kato T."/>
            <person name="Sasamoto S."/>
            <person name="Watanabe A."/>
            <person name="Idesawa K."/>
            <person name="Ishikawa A."/>
            <person name="Kawashima K."/>
            <person name="Kimura T."/>
            <person name="Kishida Y."/>
            <person name="Kiyokawa C."/>
            <person name="Kohara M."/>
            <person name="Matsumoto M."/>
            <person name="Matsuno A."/>
            <person name="Mochizuki Y."/>
            <person name="Nakayama S."/>
            <person name="Nakazaki N."/>
            <person name="Shimpo S."/>
            <person name="Sugimoto M."/>
            <person name="Takeuchi C."/>
            <person name="Yamada M."/>
            <person name="Tabata S."/>
        </authorList>
    </citation>
    <scope>NUCLEOTIDE SEQUENCE [LARGE SCALE GENOMIC DNA]</scope>
    <source>
        <strain>LMG 29417 / CECT 9101 / MAFF 303099</strain>
    </source>
</reference>
<organism>
    <name type="scientific">Mesorhizobium japonicum (strain LMG 29417 / CECT 9101 / MAFF 303099)</name>
    <name type="common">Mesorhizobium loti (strain MAFF 303099)</name>
    <dbReference type="NCBI Taxonomy" id="266835"/>
    <lineage>
        <taxon>Bacteria</taxon>
        <taxon>Pseudomonadati</taxon>
        <taxon>Pseudomonadota</taxon>
        <taxon>Alphaproteobacteria</taxon>
        <taxon>Hyphomicrobiales</taxon>
        <taxon>Phyllobacteriaceae</taxon>
        <taxon>Mesorhizobium</taxon>
    </lineage>
</organism>
<name>NRDR_RHILO</name>
<keyword id="KW-0067">ATP-binding</keyword>
<keyword id="KW-0238">DNA-binding</keyword>
<keyword id="KW-0479">Metal-binding</keyword>
<keyword id="KW-0547">Nucleotide-binding</keyword>
<keyword id="KW-0678">Repressor</keyword>
<keyword id="KW-0804">Transcription</keyword>
<keyword id="KW-0805">Transcription regulation</keyword>
<keyword id="KW-0862">Zinc</keyword>
<keyword id="KW-0863">Zinc-finger</keyword>
<gene>
    <name evidence="1" type="primary">nrdR</name>
    <name type="ordered locus">mlr8403</name>
</gene>
<sequence length="159" mass="18050">MRCPYCQSEDTQVKDSRPAEDGAAIRRRRVCPDCGGRFTTFERVQLRDLVVVKKSGRKVPFDRDKLLRSVEIAVRKRNVDPERIDRAVTGIVRQLESSGETEVASGEVGRLVMEALKSLDDVAYVRFASVYRNFREAKDFHELLGELKGDEDKSEEDAG</sequence>
<dbReference type="EMBL" id="BA000012">
    <property type="protein sequence ID" value="BAB54293.1"/>
    <property type="molecule type" value="Genomic_DNA"/>
</dbReference>
<dbReference type="RefSeq" id="WP_010915593.1">
    <property type="nucleotide sequence ID" value="NC_002678.2"/>
</dbReference>
<dbReference type="SMR" id="Q983B3"/>
<dbReference type="GeneID" id="66684569"/>
<dbReference type="KEGG" id="mlo:mlr8403"/>
<dbReference type="eggNOG" id="COG1327">
    <property type="taxonomic scope" value="Bacteria"/>
</dbReference>
<dbReference type="HOGENOM" id="CLU_108412_0_1_5"/>
<dbReference type="Proteomes" id="UP000000552">
    <property type="component" value="Chromosome"/>
</dbReference>
<dbReference type="GO" id="GO:0005524">
    <property type="term" value="F:ATP binding"/>
    <property type="evidence" value="ECO:0007669"/>
    <property type="project" value="UniProtKB-KW"/>
</dbReference>
<dbReference type="GO" id="GO:0003677">
    <property type="term" value="F:DNA binding"/>
    <property type="evidence" value="ECO:0007669"/>
    <property type="project" value="UniProtKB-KW"/>
</dbReference>
<dbReference type="GO" id="GO:0008270">
    <property type="term" value="F:zinc ion binding"/>
    <property type="evidence" value="ECO:0007669"/>
    <property type="project" value="UniProtKB-UniRule"/>
</dbReference>
<dbReference type="GO" id="GO:0045892">
    <property type="term" value="P:negative regulation of DNA-templated transcription"/>
    <property type="evidence" value="ECO:0007669"/>
    <property type="project" value="UniProtKB-UniRule"/>
</dbReference>
<dbReference type="HAMAP" id="MF_00440">
    <property type="entry name" value="NrdR"/>
    <property type="match status" value="1"/>
</dbReference>
<dbReference type="InterPro" id="IPR005144">
    <property type="entry name" value="ATP-cone_dom"/>
</dbReference>
<dbReference type="InterPro" id="IPR055173">
    <property type="entry name" value="NrdR-like_N"/>
</dbReference>
<dbReference type="InterPro" id="IPR003796">
    <property type="entry name" value="RNR_NrdR-like"/>
</dbReference>
<dbReference type="NCBIfam" id="TIGR00244">
    <property type="entry name" value="transcriptional regulator NrdR"/>
    <property type="match status" value="1"/>
</dbReference>
<dbReference type="PANTHER" id="PTHR30455">
    <property type="entry name" value="TRANSCRIPTIONAL REPRESSOR NRDR"/>
    <property type="match status" value="1"/>
</dbReference>
<dbReference type="PANTHER" id="PTHR30455:SF2">
    <property type="entry name" value="TRANSCRIPTIONAL REPRESSOR NRDR"/>
    <property type="match status" value="1"/>
</dbReference>
<dbReference type="Pfam" id="PF03477">
    <property type="entry name" value="ATP-cone"/>
    <property type="match status" value="1"/>
</dbReference>
<dbReference type="Pfam" id="PF22811">
    <property type="entry name" value="Zn_ribbon_NrdR"/>
    <property type="match status" value="1"/>
</dbReference>
<dbReference type="PROSITE" id="PS51161">
    <property type="entry name" value="ATP_CONE"/>
    <property type="match status" value="1"/>
</dbReference>
<feature type="chain" id="PRO_0000182338" description="Transcriptional repressor NrdR">
    <location>
        <begin position="1"/>
        <end position="159"/>
    </location>
</feature>
<feature type="domain" description="ATP-cone" evidence="1">
    <location>
        <begin position="49"/>
        <end position="139"/>
    </location>
</feature>
<feature type="zinc finger region" evidence="1">
    <location>
        <begin position="3"/>
        <end position="34"/>
    </location>
</feature>
<evidence type="ECO:0000255" key="1">
    <source>
        <dbReference type="HAMAP-Rule" id="MF_00440"/>
    </source>
</evidence>
<accession>Q983B3</accession>
<comment type="function">
    <text evidence="1">Negatively regulates transcription of bacterial ribonucleotide reductase nrd genes and operons by binding to NrdR-boxes.</text>
</comment>
<comment type="cofactor">
    <cofactor evidence="1">
        <name>Zn(2+)</name>
        <dbReference type="ChEBI" id="CHEBI:29105"/>
    </cofactor>
    <text evidence="1">Binds 1 zinc ion.</text>
</comment>
<comment type="similarity">
    <text evidence="1">Belongs to the NrdR family.</text>
</comment>
<proteinExistence type="inferred from homology"/>
<protein>
    <recommendedName>
        <fullName evidence="1">Transcriptional repressor NrdR</fullName>
    </recommendedName>
</protein>